<gene>
    <name evidence="1" type="primary">rpsF</name>
    <name type="ordered locus">LPC_1019</name>
</gene>
<evidence type="ECO:0000255" key="1">
    <source>
        <dbReference type="HAMAP-Rule" id="MF_00360"/>
    </source>
</evidence>
<evidence type="ECO:0000305" key="2"/>
<reference key="1">
    <citation type="submission" date="2006-11" db="EMBL/GenBank/DDBJ databases">
        <title>Identification and characterization of a new conjugation/ type IVA secretion system (trb/tra) of L. pneumophila Corby localized on a mobile genomic island.</title>
        <authorList>
            <person name="Gloeckner G."/>
            <person name="Albert-Weissenberger C."/>
            <person name="Weinmann E."/>
            <person name="Jacobi S."/>
            <person name="Schunder E."/>
            <person name="Steinert M."/>
            <person name="Buchrieser C."/>
            <person name="Hacker J."/>
            <person name="Heuner K."/>
        </authorList>
    </citation>
    <scope>NUCLEOTIDE SEQUENCE [LARGE SCALE GENOMIC DNA]</scope>
    <source>
        <strain>Corby</strain>
    </source>
</reference>
<proteinExistence type="inferred from homology"/>
<organism>
    <name type="scientific">Legionella pneumophila (strain Corby)</name>
    <dbReference type="NCBI Taxonomy" id="400673"/>
    <lineage>
        <taxon>Bacteria</taxon>
        <taxon>Pseudomonadati</taxon>
        <taxon>Pseudomonadota</taxon>
        <taxon>Gammaproteobacteria</taxon>
        <taxon>Legionellales</taxon>
        <taxon>Legionellaceae</taxon>
        <taxon>Legionella</taxon>
    </lineage>
</organism>
<name>RS6_LEGPC</name>
<accession>A5IC90</accession>
<dbReference type="EMBL" id="CP000675">
    <property type="protein sequence ID" value="ABQ54990.1"/>
    <property type="molecule type" value="Genomic_DNA"/>
</dbReference>
<dbReference type="RefSeq" id="WP_010947321.1">
    <property type="nucleotide sequence ID" value="NZ_JAPMSS010000002.1"/>
</dbReference>
<dbReference type="SMR" id="A5IC90"/>
<dbReference type="GeneID" id="57035583"/>
<dbReference type="KEGG" id="lpc:LPC_1019"/>
<dbReference type="HOGENOM" id="CLU_113441_6_1_6"/>
<dbReference type="GO" id="GO:0022627">
    <property type="term" value="C:cytosolic small ribosomal subunit"/>
    <property type="evidence" value="ECO:0007669"/>
    <property type="project" value="TreeGrafter"/>
</dbReference>
<dbReference type="GO" id="GO:0070181">
    <property type="term" value="F:small ribosomal subunit rRNA binding"/>
    <property type="evidence" value="ECO:0007669"/>
    <property type="project" value="TreeGrafter"/>
</dbReference>
<dbReference type="GO" id="GO:0003735">
    <property type="term" value="F:structural constituent of ribosome"/>
    <property type="evidence" value="ECO:0007669"/>
    <property type="project" value="InterPro"/>
</dbReference>
<dbReference type="GO" id="GO:0006412">
    <property type="term" value="P:translation"/>
    <property type="evidence" value="ECO:0007669"/>
    <property type="project" value="UniProtKB-UniRule"/>
</dbReference>
<dbReference type="CDD" id="cd00473">
    <property type="entry name" value="bS6"/>
    <property type="match status" value="1"/>
</dbReference>
<dbReference type="Gene3D" id="3.30.70.60">
    <property type="match status" value="1"/>
</dbReference>
<dbReference type="HAMAP" id="MF_00360">
    <property type="entry name" value="Ribosomal_bS6"/>
    <property type="match status" value="1"/>
</dbReference>
<dbReference type="InterPro" id="IPR000529">
    <property type="entry name" value="Ribosomal_bS6"/>
</dbReference>
<dbReference type="InterPro" id="IPR020815">
    <property type="entry name" value="Ribosomal_bS6_CS"/>
</dbReference>
<dbReference type="InterPro" id="IPR035980">
    <property type="entry name" value="Ribosomal_bS6_sf"/>
</dbReference>
<dbReference type="InterPro" id="IPR020814">
    <property type="entry name" value="Ribosomal_S6_plastid/chlpt"/>
</dbReference>
<dbReference type="InterPro" id="IPR014717">
    <property type="entry name" value="Transl_elong_EF1B/ribsomal_bS6"/>
</dbReference>
<dbReference type="NCBIfam" id="TIGR00166">
    <property type="entry name" value="S6"/>
    <property type="match status" value="1"/>
</dbReference>
<dbReference type="PANTHER" id="PTHR21011">
    <property type="entry name" value="MITOCHONDRIAL 28S RIBOSOMAL PROTEIN S6"/>
    <property type="match status" value="1"/>
</dbReference>
<dbReference type="PANTHER" id="PTHR21011:SF1">
    <property type="entry name" value="SMALL RIBOSOMAL SUBUNIT PROTEIN BS6M"/>
    <property type="match status" value="1"/>
</dbReference>
<dbReference type="Pfam" id="PF01250">
    <property type="entry name" value="Ribosomal_S6"/>
    <property type="match status" value="1"/>
</dbReference>
<dbReference type="SUPFAM" id="SSF54995">
    <property type="entry name" value="Ribosomal protein S6"/>
    <property type="match status" value="1"/>
</dbReference>
<dbReference type="PROSITE" id="PS01048">
    <property type="entry name" value="RIBOSOMAL_S6"/>
    <property type="match status" value="1"/>
</dbReference>
<keyword id="KW-0687">Ribonucleoprotein</keyword>
<keyword id="KW-0689">Ribosomal protein</keyword>
<keyword id="KW-0694">RNA-binding</keyword>
<keyword id="KW-0699">rRNA-binding</keyword>
<comment type="function">
    <text evidence="1">Binds together with bS18 to 16S ribosomal RNA.</text>
</comment>
<comment type="similarity">
    <text evidence="1">Belongs to the bacterial ribosomal protein bS6 family.</text>
</comment>
<protein>
    <recommendedName>
        <fullName evidence="1">Small ribosomal subunit protein bS6</fullName>
    </recommendedName>
    <alternativeName>
        <fullName evidence="2">30S ribosomal protein S6</fullName>
    </alternativeName>
</protein>
<sequence length="112" mass="13127">MRHYEIMFLVHPDQSEQVPGMVERYEGIITKHNGKIHRKEDLGRRQLAYSINKVHKAHYILMNVECNLDALNEIKNAFKFNDAILRHLITVQKQAITTESVLMKKEKETKVA</sequence>
<feature type="chain" id="PRO_1000005287" description="Small ribosomal subunit protein bS6">
    <location>
        <begin position="1"/>
        <end position="112"/>
    </location>
</feature>